<dbReference type="EMBL" id="EF587359">
    <property type="protein sequence ID" value="ABU88199.1"/>
    <property type="status" value="ALT_INIT"/>
    <property type="molecule type" value="Genomic_DNA"/>
</dbReference>
<dbReference type="EMBL" id="EU677193">
    <property type="protein sequence ID" value="ACC97241.1"/>
    <property type="status" value="ALT_INIT"/>
    <property type="molecule type" value="Genomic_DNA"/>
</dbReference>
<dbReference type="RefSeq" id="YP_002000388.1">
    <property type="nucleotide sequence ID" value="NC_011031.1"/>
</dbReference>
<dbReference type="SMR" id="B2X1Y6"/>
<dbReference type="GeneID" id="6440089"/>
<dbReference type="GO" id="GO:0009507">
    <property type="term" value="C:chloroplast"/>
    <property type="evidence" value="ECO:0007669"/>
    <property type="project" value="UniProtKB-SubCell"/>
</dbReference>
<dbReference type="GO" id="GO:0005762">
    <property type="term" value="C:mitochondrial large ribosomal subunit"/>
    <property type="evidence" value="ECO:0007669"/>
    <property type="project" value="TreeGrafter"/>
</dbReference>
<dbReference type="GO" id="GO:0019843">
    <property type="term" value="F:rRNA binding"/>
    <property type="evidence" value="ECO:0007669"/>
    <property type="project" value="InterPro"/>
</dbReference>
<dbReference type="GO" id="GO:0003735">
    <property type="term" value="F:structural constituent of ribosome"/>
    <property type="evidence" value="ECO:0007669"/>
    <property type="project" value="InterPro"/>
</dbReference>
<dbReference type="GO" id="GO:0032543">
    <property type="term" value="P:mitochondrial translation"/>
    <property type="evidence" value="ECO:0007669"/>
    <property type="project" value="TreeGrafter"/>
</dbReference>
<dbReference type="CDD" id="cd01433">
    <property type="entry name" value="Ribosomal_L16_L10e"/>
    <property type="match status" value="1"/>
</dbReference>
<dbReference type="FunFam" id="3.90.1170.10:FF:000001">
    <property type="entry name" value="50S ribosomal protein L16"/>
    <property type="match status" value="1"/>
</dbReference>
<dbReference type="Gene3D" id="3.90.1170.10">
    <property type="entry name" value="Ribosomal protein L10e/L16"/>
    <property type="match status" value="1"/>
</dbReference>
<dbReference type="HAMAP" id="MF_01342">
    <property type="entry name" value="Ribosomal_uL16"/>
    <property type="match status" value="1"/>
</dbReference>
<dbReference type="InterPro" id="IPR047873">
    <property type="entry name" value="Ribosomal_uL16"/>
</dbReference>
<dbReference type="InterPro" id="IPR000114">
    <property type="entry name" value="Ribosomal_uL16_bact-type"/>
</dbReference>
<dbReference type="InterPro" id="IPR020798">
    <property type="entry name" value="Ribosomal_uL16_CS"/>
</dbReference>
<dbReference type="InterPro" id="IPR016180">
    <property type="entry name" value="Ribosomal_uL16_dom"/>
</dbReference>
<dbReference type="InterPro" id="IPR036920">
    <property type="entry name" value="Ribosomal_uL16_sf"/>
</dbReference>
<dbReference type="NCBIfam" id="TIGR01164">
    <property type="entry name" value="rplP_bact"/>
    <property type="match status" value="1"/>
</dbReference>
<dbReference type="PANTHER" id="PTHR12220">
    <property type="entry name" value="50S/60S RIBOSOMAL PROTEIN L16"/>
    <property type="match status" value="1"/>
</dbReference>
<dbReference type="PANTHER" id="PTHR12220:SF13">
    <property type="entry name" value="LARGE RIBOSOMAL SUBUNIT PROTEIN UL16M"/>
    <property type="match status" value="1"/>
</dbReference>
<dbReference type="Pfam" id="PF00252">
    <property type="entry name" value="Ribosomal_L16"/>
    <property type="match status" value="1"/>
</dbReference>
<dbReference type="PRINTS" id="PR00060">
    <property type="entry name" value="RIBOSOMALL16"/>
</dbReference>
<dbReference type="SUPFAM" id="SSF54686">
    <property type="entry name" value="Ribosomal protein L16p/L10e"/>
    <property type="match status" value="1"/>
</dbReference>
<dbReference type="PROSITE" id="PS00586">
    <property type="entry name" value="RIBOSOMAL_L16_1"/>
    <property type="match status" value="1"/>
</dbReference>
<dbReference type="PROSITE" id="PS00701">
    <property type="entry name" value="RIBOSOMAL_L16_2"/>
    <property type="match status" value="1"/>
</dbReference>
<accession>B2X1Y6</accession>
<protein>
    <recommendedName>
        <fullName evidence="1">Large ribosomal subunit protein uL16c</fullName>
    </recommendedName>
    <alternativeName>
        <fullName evidence="3">50S ribosomal protein L16, chloroplastic</fullName>
    </alternativeName>
</protein>
<name>RK16_OEDCA</name>
<gene>
    <name evidence="1" type="primary">rpl16</name>
</gene>
<reference key="1">
    <citation type="journal article" date="2008" name="J. Phycol.">
        <title>Deep division in the Chlorophyceae (Chlorophyta) revealed by chloroplast phylogenomic analyseS.</title>
        <authorList>
            <person name="Turmel M."/>
            <person name="Brouard J.-S."/>
            <person name="Gagnon C."/>
            <person name="Otis C."/>
            <person name="Lemieux C."/>
        </authorList>
        <dbReference type="AGRICOLA" id="IND44059346"/>
    </citation>
    <scope>NUCLEOTIDE SEQUENCE [GENOMIC DNA]</scope>
    <source>
        <strain>SAG 575-1b / CCAP 575/1B / UTEX LB 40</strain>
    </source>
</reference>
<reference key="2">
    <citation type="journal article" date="2008" name="BMC Genomics">
        <title>Chloroplast DNA sequence of the green alga Oedogonium cardiacum (Chlorophyceae): unique genome architecture, derived characters shared with the Chaetophorales and novel genes acquired through horizontal transfer.</title>
        <authorList>
            <person name="Brouard J.-S."/>
            <person name="Otis C."/>
            <person name="Lemieux C."/>
            <person name="Turmel M."/>
        </authorList>
    </citation>
    <scope>NUCLEOTIDE SEQUENCE [LARGE SCALE GENOMIC DNA]</scope>
    <source>
        <strain>SAG 575-1b / CCAP 575/1B / UTEX LB 40</strain>
    </source>
</reference>
<keyword id="KW-0150">Chloroplast</keyword>
<keyword id="KW-0934">Plastid</keyword>
<keyword id="KW-0687">Ribonucleoprotein</keyword>
<keyword id="KW-0689">Ribosomal protein</keyword>
<evidence type="ECO:0000255" key="1">
    <source>
        <dbReference type="HAMAP-Rule" id="MF_01342"/>
    </source>
</evidence>
<evidence type="ECO:0000256" key="2">
    <source>
        <dbReference type="SAM" id="MobiDB-lite"/>
    </source>
</evidence>
<evidence type="ECO:0000305" key="3"/>
<organism>
    <name type="scientific">Oedogonium cardiacum</name>
    <name type="common">Filamentous green alga</name>
    <dbReference type="NCBI Taxonomy" id="55995"/>
    <lineage>
        <taxon>Eukaryota</taxon>
        <taxon>Viridiplantae</taxon>
        <taxon>Chlorophyta</taxon>
        <taxon>core chlorophytes</taxon>
        <taxon>Chlorophyceae</taxon>
        <taxon>OCC clade</taxon>
        <taxon>Oedogoniales</taxon>
        <taxon>Oedogoniaceae</taxon>
        <taxon>Oedogonium</taxon>
    </lineage>
</organism>
<feature type="chain" id="PRO_0000354649" description="Large ribosomal subunit protein uL16c">
    <location>
        <begin position="1"/>
        <end position="137"/>
    </location>
</feature>
<feature type="region of interest" description="Disordered" evidence="2">
    <location>
        <begin position="1"/>
        <end position="21"/>
    </location>
</feature>
<comment type="subunit">
    <text evidence="1">Part of the 50S ribosomal subunit.</text>
</comment>
<comment type="subcellular location">
    <subcellularLocation>
        <location>Plastid</location>
        <location>Chloroplast</location>
    </subcellularLocation>
</comment>
<comment type="similarity">
    <text evidence="1">Belongs to the universal ribosomal protein uL16 family.</text>
</comment>
<comment type="sequence caution" evidence="3">
    <conflict type="erroneous initiation">
        <sequence resource="EMBL-CDS" id="ABU88199"/>
    </conflict>
</comment>
<comment type="sequence caution" evidence="3">
    <conflict type="erroneous initiation">
        <sequence resource="EMBL-CDS" id="ACC97241"/>
    </conflict>
</comment>
<geneLocation type="chloroplast"/>
<sequence length="137" mass="15586">MLSPKKTKYRKQHRGRMKGKAQRGNKIAYGGFALQAIQPCWITSRQIEAGRRVLTRFVRRGGKLWIRIFPDKPITMRASGTRMGSGKGSPQYWVAVVKPGRILYEIKGISIKLATRALKIAGYKMPIQTKILKPFEN</sequence>
<proteinExistence type="inferred from homology"/>